<gene>
    <name type="primary">HSPD1</name>
    <name type="synonym">HSP60</name>
</gene>
<sequence>AKDVXFGXDARAL</sequence>
<organism>
    <name type="scientific">Canis lupus familiaris</name>
    <name type="common">Dog</name>
    <name type="synonym">Canis familiaris</name>
    <dbReference type="NCBI Taxonomy" id="9615"/>
    <lineage>
        <taxon>Eukaryota</taxon>
        <taxon>Metazoa</taxon>
        <taxon>Chordata</taxon>
        <taxon>Craniata</taxon>
        <taxon>Vertebrata</taxon>
        <taxon>Euteleostomi</taxon>
        <taxon>Mammalia</taxon>
        <taxon>Eutheria</taxon>
        <taxon>Laurasiatheria</taxon>
        <taxon>Carnivora</taxon>
        <taxon>Caniformia</taxon>
        <taxon>Canidae</taxon>
        <taxon>Canis</taxon>
    </lineage>
</organism>
<name>CH60_CANLF</name>
<keyword id="KW-0067">ATP-binding</keyword>
<keyword id="KW-0143">Chaperone</keyword>
<keyword id="KW-0903">Direct protein sequencing</keyword>
<keyword id="KW-0413">Isomerase</keyword>
<keyword id="KW-0496">Mitochondrion</keyword>
<keyword id="KW-0547">Nucleotide-binding</keyword>
<keyword id="KW-1185">Reference proteome</keyword>
<reference key="1">
    <citation type="journal article" date="1997" name="Electrophoresis">
        <title>HSC-2DPAGE and the two-dimensional gel electrophoresis database of dog heart proteins.</title>
        <authorList>
            <person name="Dunn M.J."/>
            <person name="Corbett J.M."/>
            <person name="Wheeler C.H."/>
        </authorList>
    </citation>
    <scope>PROTEIN SEQUENCE</scope>
    <source>
        <tissue>Heart</tissue>
    </source>
</reference>
<dbReference type="EC" id="5.6.1.7" evidence="1"/>
<dbReference type="FunCoup" id="P49818">
    <property type="interactions" value="1270"/>
</dbReference>
<dbReference type="InParanoid" id="P49818"/>
<dbReference type="Proteomes" id="UP000002254">
    <property type="component" value="Unplaced"/>
</dbReference>
<dbReference type="Proteomes" id="UP000694429">
    <property type="component" value="Unplaced"/>
</dbReference>
<dbReference type="Proteomes" id="UP000694542">
    <property type="component" value="Unplaced"/>
</dbReference>
<dbReference type="Proteomes" id="UP000805418">
    <property type="component" value="Unplaced"/>
</dbReference>
<dbReference type="GO" id="GO:0005737">
    <property type="term" value="C:cytoplasm"/>
    <property type="evidence" value="ECO:0000250"/>
    <property type="project" value="UniProtKB"/>
</dbReference>
<dbReference type="GO" id="GO:0005759">
    <property type="term" value="C:mitochondrial matrix"/>
    <property type="evidence" value="ECO:0007669"/>
    <property type="project" value="UniProtKB-SubCell"/>
</dbReference>
<dbReference type="GO" id="GO:0032991">
    <property type="term" value="C:protein-containing complex"/>
    <property type="evidence" value="ECO:0000250"/>
    <property type="project" value="UniProtKB"/>
</dbReference>
<dbReference type="GO" id="GO:0005524">
    <property type="term" value="F:ATP binding"/>
    <property type="evidence" value="ECO:0007669"/>
    <property type="project" value="UniProtKB-KW"/>
</dbReference>
<dbReference type="GO" id="GO:0016853">
    <property type="term" value="F:isomerase activity"/>
    <property type="evidence" value="ECO:0007669"/>
    <property type="project" value="UniProtKB-KW"/>
</dbReference>
<accession>P49818</accession>
<evidence type="ECO:0000250" key="1">
    <source>
        <dbReference type="UniProtKB" id="P10809"/>
    </source>
</evidence>
<evidence type="ECO:0000250" key="2">
    <source>
        <dbReference type="UniProtKB" id="P63038"/>
    </source>
</evidence>
<evidence type="ECO:0000305" key="3"/>
<proteinExistence type="evidence at protein level"/>
<protein>
    <recommendedName>
        <fullName>60 kDa heat shock protein, mitochondrial</fullName>
        <ecNumber evidence="1">5.6.1.7</ecNumber>
    </recommendedName>
    <alternativeName>
        <fullName>60 kDa chaperonin</fullName>
    </alternativeName>
    <alternativeName>
        <fullName>Chaperonin 60</fullName>
        <shortName>CPN60</shortName>
    </alternativeName>
    <alternativeName>
        <fullName>Heat shock protein 60</fullName>
        <shortName>HSP-60</shortName>
        <shortName>Hsp60</shortName>
    </alternativeName>
</protein>
<comment type="function">
    <text evidence="1">Chaperonin implicated in mitochondrial protein import and macromolecular assembly. Together with Hsp10, facilitates the correct folding of imported proteins. May also prevent misfolding and promote the refolding and proper assembly of unfolded polypeptides generated under stress conditions in the mitochondrial matrix. The functional units of these chaperonins consist of heptameric rings of the large subunit Hsp60, which function as a back-to-back double ring. In a cyclic reaction, Hsp60 ring complexes bind one unfolded substrate protein per ring, followed by the binding of ATP and association with 2 heptameric rings of the co-chaperonin Hsp10. This leads to sequestration of the substrate protein in the inner cavity of Hsp60 where, for a certain period of time, it can fold undisturbed by other cell components. Synchronous hydrolysis of ATP in all Hsp60 subunits results in the dissociation of the chaperonin rings and the release of ADP and the folded substrate protein.</text>
</comment>
<comment type="catalytic activity">
    <reaction evidence="1">
        <text>ATP + H2O + a folded polypeptide = ADP + phosphate + an unfolded polypeptide.</text>
        <dbReference type="EC" id="5.6.1.7"/>
    </reaction>
</comment>
<comment type="subunit">
    <text evidence="1 2">Homoheptamer arranged in a ring structure. The functional units of these chaperonins consist of heptameric rings of the large subunit Hsp60, which function as a back-to-back double ring. Interacts with 2 heptameric Hsp10 rings to form the symmetrical football complex (By similarity). Interacts with HRAS (By similarity). Interacts with ATAD3A. Interacts with ETFBKMT and EEF1AKMT3 (By similarity). Interacts with MFHAS1 (By similarity).</text>
</comment>
<comment type="subcellular location">
    <subcellularLocation>
        <location evidence="1">Mitochondrion matrix</location>
    </subcellularLocation>
</comment>
<comment type="similarity">
    <text evidence="3">Belongs to the chaperonin (HSP60) family.</text>
</comment>
<feature type="chain" id="PRO_0000063636" description="60 kDa heat shock protein, mitochondrial">
    <location>
        <begin position="1"/>
        <end position="13" status="greater than"/>
    </location>
</feature>
<feature type="non-terminal residue">
    <location>
        <position position="13"/>
    </location>
</feature>